<feature type="chain" id="PRO_0000252230" description="Uncharacterized protein YnfO">
    <location>
        <begin position="1"/>
        <end position="77"/>
    </location>
</feature>
<feature type="region of interest" description="Disordered" evidence="1">
    <location>
        <begin position="53"/>
        <end position="77"/>
    </location>
</feature>
<accession>Q2EES0</accession>
<accession>Q2MB91</accession>
<keyword id="KW-1185">Reference proteome</keyword>
<proteinExistence type="predicted"/>
<name>YNFO_ECOLI</name>
<reference key="1">
    <citation type="journal article" date="1997" name="Science">
        <title>The complete genome sequence of Escherichia coli K-12.</title>
        <authorList>
            <person name="Blattner F.R."/>
            <person name="Plunkett G. III"/>
            <person name="Bloch C.A."/>
            <person name="Perna N.T."/>
            <person name="Burland V."/>
            <person name="Riley M."/>
            <person name="Collado-Vides J."/>
            <person name="Glasner J.D."/>
            <person name="Rode C.K."/>
            <person name="Mayhew G.F."/>
            <person name="Gregor J."/>
            <person name="Davis N.W."/>
            <person name="Kirkpatrick H.A."/>
            <person name="Goeden M.A."/>
            <person name="Rose D.J."/>
            <person name="Mau B."/>
            <person name="Shao Y."/>
        </authorList>
    </citation>
    <scope>NUCLEOTIDE SEQUENCE [LARGE SCALE GENOMIC DNA]</scope>
    <source>
        <strain>K12 / MG1655 / ATCC 47076</strain>
    </source>
</reference>
<reference key="2">
    <citation type="journal article" date="2006" name="Mol. Syst. Biol.">
        <title>Highly accurate genome sequences of Escherichia coli K-12 strains MG1655 and W3110.</title>
        <authorList>
            <person name="Hayashi K."/>
            <person name="Morooka N."/>
            <person name="Yamamoto Y."/>
            <person name="Fujita K."/>
            <person name="Isono K."/>
            <person name="Choi S."/>
            <person name="Ohtsubo E."/>
            <person name="Baba T."/>
            <person name="Wanner B.L."/>
            <person name="Mori H."/>
            <person name="Horiuchi T."/>
        </authorList>
    </citation>
    <scope>NUCLEOTIDE SEQUENCE [LARGE SCALE GENOMIC DNA]</scope>
    <source>
        <strain>K12 / W3110 / ATCC 27325 / DSM 5911</strain>
    </source>
</reference>
<gene>
    <name type="primary">ynfO</name>
    <name type="ordered locus">b4533</name>
    <name type="ordered locus">JW5251</name>
</gene>
<organism>
    <name type="scientific">Escherichia coli (strain K12)</name>
    <dbReference type="NCBI Taxonomy" id="83333"/>
    <lineage>
        <taxon>Bacteria</taxon>
        <taxon>Pseudomonadati</taxon>
        <taxon>Pseudomonadota</taxon>
        <taxon>Gammaproteobacteria</taxon>
        <taxon>Enterobacterales</taxon>
        <taxon>Enterobacteriaceae</taxon>
        <taxon>Escherichia</taxon>
    </lineage>
</organism>
<evidence type="ECO:0000256" key="1">
    <source>
        <dbReference type="SAM" id="MobiDB-lite"/>
    </source>
</evidence>
<evidence type="ECO:0000305" key="2"/>
<protein>
    <recommendedName>
        <fullName evidence="2">Uncharacterized protein YnfO</fullName>
    </recommendedName>
    <alternativeName>
        <fullName>Uncharacterized protein YnfO from Qin prophage</fullName>
    </alternativeName>
</protein>
<sequence length="77" mass="9023">MSTKNRTRRTTTRNIRFPNQMIEQINIALEQKGSGNFSAWVIEACRRRLCSEKRVSSEANKEKSDITELLRKQVRPD</sequence>
<dbReference type="EMBL" id="U00096">
    <property type="protein sequence ID" value="ABD18667.1"/>
    <property type="molecule type" value="Genomic_DNA"/>
</dbReference>
<dbReference type="EMBL" id="AP009048">
    <property type="protein sequence ID" value="BAE76465.1"/>
    <property type="molecule type" value="Genomic_DNA"/>
</dbReference>
<dbReference type="RefSeq" id="WP_001368374.1">
    <property type="nucleotide sequence ID" value="NZ_SSUV01000066.1"/>
</dbReference>
<dbReference type="RefSeq" id="YP_588454.1">
    <property type="nucleotide sequence ID" value="NC_000913.3"/>
</dbReference>
<dbReference type="SMR" id="Q2EES0"/>
<dbReference type="BioGRID" id="4260237">
    <property type="interactions" value="4"/>
</dbReference>
<dbReference type="FunCoup" id="Q2EES0">
    <property type="interactions" value="7"/>
</dbReference>
<dbReference type="STRING" id="511145.b4533"/>
<dbReference type="jPOST" id="Q2EES0"/>
<dbReference type="PaxDb" id="511145-b4533"/>
<dbReference type="EnsemblBacteria" id="ABD18667">
    <property type="protein sequence ID" value="ABD18667"/>
    <property type="gene ID" value="b4533"/>
</dbReference>
<dbReference type="GeneID" id="1450267"/>
<dbReference type="KEGG" id="ecj:JW5251"/>
<dbReference type="KEGG" id="eco:b4533"/>
<dbReference type="KEGG" id="ecoc:C3026_08940"/>
<dbReference type="PATRIC" id="fig|511145.12.peg.1620"/>
<dbReference type="eggNOG" id="ENOG5033AKV">
    <property type="taxonomic scope" value="Bacteria"/>
</dbReference>
<dbReference type="HOGENOM" id="CLU_191341_0_1_6"/>
<dbReference type="InParanoid" id="Q2EES0"/>
<dbReference type="OMA" id="ACTSIQS"/>
<dbReference type="OrthoDB" id="6419848at2"/>
<dbReference type="BioCyc" id="EcoCyc:MONOMER0-2674"/>
<dbReference type="PRO" id="PR:Q2EES0"/>
<dbReference type="Proteomes" id="UP000000625">
    <property type="component" value="Chromosome"/>
</dbReference>
<dbReference type="InterPro" id="IPR025030">
    <property type="entry name" value="DUF3950"/>
</dbReference>
<dbReference type="NCBIfam" id="NF041551">
    <property type="entry name" value="YlcI_YnfO_N"/>
    <property type="match status" value="1"/>
</dbReference>
<dbReference type="Pfam" id="PF13132">
    <property type="entry name" value="DUF3950"/>
    <property type="match status" value="1"/>
</dbReference>